<feature type="peptide" id="PRO_0000248498" description="Dermaseptin-H8">
    <location>
        <begin position="1"/>
        <end position="33"/>
    </location>
</feature>
<feature type="modified residue" description="Leucine amide" evidence="3">
    <location>
        <position position="33"/>
    </location>
</feature>
<comment type="function">
    <text evidence="1">Has antimicrobial activity.</text>
</comment>
<comment type="subcellular location">
    <subcellularLocation>
        <location evidence="3">Secreted</location>
    </subcellularLocation>
</comment>
<comment type="tissue specificity">
    <text evidence="3">Expressed by the skin glands.</text>
</comment>
<comment type="mass spectrometry"/>
<comment type="similarity">
    <text evidence="2">Belongs to the frog skin active peptide (FSAP) family. Dermaseptin subfamily.</text>
</comment>
<comment type="online information" name="The antimicrobial peptide database">
    <link uri="https://wangapd3.com/database/query_output.php?ID=0949"/>
</comment>
<organism>
    <name type="scientific">Pithecopus hypochondrialis</name>
    <name type="common">Orange-legged leaf frog</name>
    <name type="synonym">Phyllomedusa hypochondrialis</name>
    <dbReference type="NCBI Taxonomy" id="317381"/>
    <lineage>
        <taxon>Eukaryota</taxon>
        <taxon>Metazoa</taxon>
        <taxon>Chordata</taxon>
        <taxon>Craniata</taxon>
        <taxon>Vertebrata</taxon>
        <taxon>Euteleostomi</taxon>
        <taxon>Amphibia</taxon>
        <taxon>Batrachia</taxon>
        <taxon>Anura</taxon>
        <taxon>Neobatrachia</taxon>
        <taxon>Hyloidea</taxon>
        <taxon>Hylidae</taxon>
        <taxon>Phyllomedusinae</taxon>
        <taxon>Pithecopus</taxon>
    </lineage>
</organism>
<protein>
    <recommendedName>
        <fullName evidence="5">Dermaseptin-H8</fullName>
        <shortName evidence="5">DRS-H8</shortName>
    </recommendedName>
    <alternativeName>
        <fullName evidence="4">DShypo 06</fullName>
    </alternativeName>
</protein>
<dbReference type="SMR" id="P84601"/>
<dbReference type="GO" id="GO:0005576">
    <property type="term" value="C:extracellular region"/>
    <property type="evidence" value="ECO:0007669"/>
    <property type="project" value="UniProtKB-SubCell"/>
</dbReference>
<dbReference type="GO" id="GO:0006952">
    <property type="term" value="P:defense response"/>
    <property type="evidence" value="ECO:0007669"/>
    <property type="project" value="UniProtKB-KW"/>
</dbReference>
<dbReference type="InterPro" id="IPR022731">
    <property type="entry name" value="Dermaseptin_dom"/>
</dbReference>
<dbReference type="Pfam" id="PF12121">
    <property type="entry name" value="DD_K"/>
    <property type="match status" value="1"/>
</dbReference>
<keyword id="KW-0027">Amidation</keyword>
<keyword id="KW-0878">Amphibian defense peptide</keyword>
<keyword id="KW-0929">Antimicrobial</keyword>
<keyword id="KW-0903">Direct protein sequencing</keyword>
<keyword id="KW-0964">Secreted</keyword>
<proteinExistence type="evidence at protein level"/>
<evidence type="ECO:0000250" key="1">
    <source>
        <dbReference type="UniProtKB" id="P83637"/>
    </source>
</evidence>
<evidence type="ECO:0000255" key="2"/>
<evidence type="ECO:0000269" key="3">
    <source>
    </source>
</evidence>
<evidence type="ECO:0000303" key="4">
    <source>
    </source>
</evidence>
<evidence type="ECO:0000303" key="5">
    <source>
    </source>
</evidence>
<name>DRS8_PITHY</name>
<sequence>GLWSTIKQKGKEAAIAAAKAAGQAVLNSASEAL</sequence>
<reference key="1">
    <citation type="journal article" date="2006" name="Biochem. Biophys. Res. Commun.">
        <title>Novel dermaseptins from Phyllomedusa hypochondrialis (Amphibia).</title>
        <authorList>
            <person name="Brand G.D."/>
            <person name="Leite J.R.S.A."/>
            <person name="de Sa Mandel S.M."/>
            <person name="Mesquita D.A."/>
            <person name="Silva L.P."/>
            <person name="Prates M.V."/>
            <person name="Barbosa E.A."/>
            <person name="Vinecky F."/>
            <person name="Martins G.R."/>
            <person name="Galasso J.H."/>
            <person name="Kuckelhaus S.A.S."/>
            <person name="Sampaio R.N.R."/>
            <person name="Furtado J.R. Jr."/>
            <person name="Andrade A.C."/>
            <person name="Bloch C. Jr."/>
        </authorList>
    </citation>
    <scope>PROTEIN SEQUENCE</scope>
    <scope>SUBCELLULAR LOCATION</scope>
    <scope>TISSUE SPECIFICITY</scope>
    <scope>MASS SPECTROMETRY</scope>
    <scope>AMIDATION AT LEU-33</scope>
    <source>
        <tissue>Skin secretion</tissue>
    </source>
</reference>
<reference key="2">
    <citation type="journal article" date="2008" name="Peptides">
        <title>A consistent nomenclature of antimicrobial peptides isolated from frogs of the subfamily Phyllomedusinae.</title>
        <authorList>
            <person name="Amiche M."/>
            <person name="Ladram A."/>
            <person name="Nicolas P."/>
        </authorList>
    </citation>
    <scope>NOMENCLATURE</scope>
</reference>
<accession>P84601</accession>